<comment type="function">
    <text evidence="1">The phosphoenolpyruvate-dependent sugar phosphotransferase system (sugar PTS), a major carbohydrate active transport system, catalyzes the phosphorylation of incoming sugar substrates concomitantly with their translocation across the cell membrane. This system is involved in N-acetylmuramic acid (MurNAc) transport, yielding cytoplasmic MurNAc-6-P. Is also able to take up anhydro-N-acetylmuramic acid (anhMurNAc), but cannot phosphorylate the carbon 6, probably because of the 1,6-anhydro ring.</text>
</comment>
<comment type="catalytic activity">
    <reaction evidence="1">
        <text>N-acetyl-beta-D-muramate(out) + N(pros)-phospho-L-histidyl-[protein] = N-acetyl-beta-D-muramate 6-phosphate(in) + L-histidyl-[protein]</text>
        <dbReference type="Rhea" id="RHEA:33399"/>
        <dbReference type="Rhea" id="RHEA-COMP:9745"/>
        <dbReference type="Rhea" id="RHEA-COMP:9746"/>
        <dbReference type="ChEBI" id="CHEBI:29979"/>
        <dbReference type="ChEBI" id="CHEBI:58721"/>
        <dbReference type="ChEBI" id="CHEBI:64837"/>
        <dbReference type="ChEBI" id="CHEBI:64848"/>
        <dbReference type="EC" id="2.7.1.192"/>
    </reaction>
</comment>
<comment type="subcellular location">
    <subcellularLocation>
        <location evidence="3">Cell inner membrane</location>
        <topology evidence="3">Multi-pass membrane protein</topology>
    </subcellularLocation>
</comment>
<comment type="domain">
    <text evidence="2">The EIIB domain is phosphorylated by phospho-EIIA on a cysteinyl or histidyl residue, depending on the transported sugar. Then, it transfers the phosphoryl group to the sugar substrate concomitantly with the sugar uptake processed by the EIIC domain.</text>
</comment>
<comment type="domain">
    <text evidence="3">The EIIC domain forms the PTS system translocation channel and contains the specific substrate-binding site.</text>
</comment>
<protein>
    <recommendedName>
        <fullName evidence="1">PTS system N-acetylmuramic acid-specific EIIBC component</fullName>
    </recommendedName>
    <alternativeName>
        <fullName evidence="1">EIIBC-MurNAc</fullName>
    </alternativeName>
    <domain>
        <recommendedName>
            <fullName evidence="1">N-acetylmuramic acid-specific phosphotransferase enzyme IIB component</fullName>
            <ecNumber evidence="1">2.7.1.192</ecNumber>
        </recommendedName>
        <alternativeName>
            <fullName evidence="1">PTS system N-acetylmuramic acid-specific EIIB component</fullName>
        </alternativeName>
    </domain>
    <domain>
        <recommendedName>
            <fullName evidence="1">N-acetylmuramic acid permease IIC component</fullName>
        </recommendedName>
        <alternativeName>
            <fullName evidence="1">PTS system N-acetylmuramic acid-specific EIIC component</fullName>
        </alternativeName>
    </domain>
</protein>
<name>PTYBC_PHOLL</name>
<reference key="1">
    <citation type="journal article" date="2003" name="Nat. Biotechnol.">
        <title>The genome sequence of the entomopathogenic bacterium Photorhabdus luminescens.</title>
        <authorList>
            <person name="Duchaud E."/>
            <person name="Rusniok C."/>
            <person name="Frangeul L."/>
            <person name="Buchrieser C."/>
            <person name="Givaudan A."/>
            <person name="Taourit S."/>
            <person name="Bocs S."/>
            <person name="Boursaux-Eude C."/>
            <person name="Chandler M."/>
            <person name="Charles J.-F."/>
            <person name="Dassa E."/>
            <person name="Derose R."/>
            <person name="Derzelle S."/>
            <person name="Freyssinet G."/>
            <person name="Gaudriault S."/>
            <person name="Medigue C."/>
            <person name="Lanois A."/>
            <person name="Powell K."/>
            <person name="Siguier P."/>
            <person name="Vincent R."/>
            <person name="Wingate V."/>
            <person name="Zouine M."/>
            <person name="Glaser P."/>
            <person name="Boemare N."/>
            <person name="Danchin A."/>
            <person name="Kunst F."/>
        </authorList>
    </citation>
    <scope>NUCLEOTIDE SEQUENCE [LARGE SCALE GENOMIC DNA]</scope>
    <source>
        <strain>DSM 15139 / CIP 105565 / TT01</strain>
    </source>
</reference>
<sequence length="492" mass="52102">MAKINQSVIAQILKAIGNANNVAQCGNCMTRLRLTLRDSTQVDKVALKQIPNVLGIIESDDQFQIVLGPGKAQAAAEIMNELLNSSTPTAQSKPSDTHLANIASANKKQLKEKQVSAVHKFLTKFATIFTPLIPGFIAVGLLLGFATLLEQITIQGVEHPNTILVEIIGYMKVFSKGMFSFLSILIGYNAQKAFGGSGINGAIIASLFVLSYNPDATSGFYSGISTFFGYSIDPRGNIIGVLIAAILGAWVERQVRKIIPDNLDMILTSAITLLIMGAIAFIFIMPLGSYLFSGMSWLFLHLNGNPFGTAILAGLFLLAVMFGVHQGFVPVYFALMEAQGFNSLFPILAMAGGGQVGAALALYVKAKKDSLLRTQIKGAIIPGLLGIGEPLIYGVTLPRIKPFITACLGGAAGGFFIGLIAYLGLPVGLNTVFGPSGLVALPLMTSNNGIFVGMAVYAAGLVVAYISGFVLTLIFGSKKIEVLKADVQSQKE</sequence>
<gene>
    <name type="primary">murP</name>
    <name type="ordered locus">plu0402</name>
</gene>
<accession>Q7N9D9</accession>
<organism>
    <name type="scientific">Photorhabdus laumondii subsp. laumondii (strain DSM 15139 / CIP 105565 / TT01)</name>
    <name type="common">Photorhabdus luminescens subsp. laumondii</name>
    <dbReference type="NCBI Taxonomy" id="243265"/>
    <lineage>
        <taxon>Bacteria</taxon>
        <taxon>Pseudomonadati</taxon>
        <taxon>Pseudomonadota</taxon>
        <taxon>Gammaproteobacteria</taxon>
        <taxon>Enterobacterales</taxon>
        <taxon>Morganellaceae</taxon>
        <taxon>Photorhabdus</taxon>
    </lineage>
</organism>
<evidence type="ECO:0000250" key="1">
    <source>
        <dbReference type="UniProtKB" id="P77272"/>
    </source>
</evidence>
<evidence type="ECO:0000255" key="2">
    <source>
        <dbReference type="PROSITE-ProRule" id="PRU00421"/>
    </source>
</evidence>
<evidence type="ECO:0000255" key="3">
    <source>
        <dbReference type="PROSITE-ProRule" id="PRU00426"/>
    </source>
</evidence>
<feature type="chain" id="PRO_0000248957" description="PTS system N-acetylmuramic acid-specific EIIBC component">
    <location>
        <begin position="1"/>
        <end position="492"/>
    </location>
</feature>
<feature type="transmembrane region" description="Helical" evidence="3">
    <location>
        <begin position="125"/>
        <end position="145"/>
    </location>
</feature>
<feature type="transmembrane region" description="Helical" evidence="3">
    <location>
        <begin position="167"/>
        <end position="187"/>
    </location>
</feature>
<feature type="transmembrane region" description="Helical" evidence="3">
    <location>
        <begin position="193"/>
        <end position="213"/>
    </location>
</feature>
<feature type="transmembrane region" description="Helical" evidence="3">
    <location>
        <begin position="227"/>
        <end position="247"/>
    </location>
</feature>
<feature type="transmembrane region" description="Helical" evidence="3">
    <location>
        <begin position="265"/>
        <end position="285"/>
    </location>
</feature>
<feature type="transmembrane region" description="Helical" evidence="3">
    <location>
        <begin position="311"/>
        <end position="331"/>
    </location>
</feature>
<feature type="transmembrane region" description="Helical" evidence="3">
    <location>
        <begin position="344"/>
        <end position="364"/>
    </location>
</feature>
<feature type="transmembrane region" description="Helical" evidence="3">
    <location>
        <begin position="378"/>
        <end position="398"/>
    </location>
</feature>
<feature type="transmembrane region" description="Helical" evidence="3">
    <location>
        <begin position="403"/>
        <end position="423"/>
    </location>
</feature>
<feature type="transmembrane region" description="Helical" evidence="3">
    <location>
        <begin position="450"/>
        <end position="470"/>
    </location>
</feature>
<feature type="domain" description="PTS EIIB type-1" evidence="2">
    <location>
        <begin position="1"/>
        <end position="89"/>
    </location>
</feature>
<feature type="domain" description="PTS EIIC type-1" evidence="3">
    <location>
        <begin position="123"/>
        <end position="487"/>
    </location>
</feature>
<feature type="active site" description="Phosphocysteine intermediate; for EIIB activity" evidence="2">
    <location>
        <position position="28"/>
    </location>
</feature>
<proteinExistence type="inferred from homology"/>
<dbReference type="EC" id="2.7.1.192" evidence="1"/>
<dbReference type="EMBL" id="BX571860">
    <property type="protein sequence ID" value="CAE12697.1"/>
    <property type="molecule type" value="Genomic_DNA"/>
</dbReference>
<dbReference type="RefSeq" id="WP_011144788.1">
    <property type="nucleotide sequence ID" value="NC_005126.1"/>
</dbReference>
<dbReference type="SMR" id="Q7N9D9"/>
<dbReference type="STRING" id="243265.plu0402"/>
<dbReference type="GeneID" id="48846687"/>
<dbReference type="KEGG" id="plu:plu0402"/>
<dbReference type="eggNOG" id="COG1263">
    <property type="taxonomic scope" value="Bacteria"/>
</dbReference>
<dbReference type="eggNOG" id="COG1264">
    <property type="taxonomic scope" value="Bacteria"/>
</dbReference>
<dbReference type="HOGENOM" id="CLU_012312_2_0_6"/>
<dbReference type="OrthoDB" id="9797715at2"/>
<dbReference type="Proteomes" id="UP000002514">
    <property type="component" value="Chromosome"/>
</dbReference>
<dbReference type="GO" id="GO:0005886">
    <property type="term" value="C:plasma membrane"/>
    <property type="evidence" value="ECO:0007669"/>
    <property type="project" value="UniProtKB-SubCell"/>
</dbReference>
<dbReference type="GO" id="GO:0016301">
    <property type="term" value="F:kinase activity"/>
    <property type="evidence" value="ECO:0007669"/>
    <property type="project" value="UniProtKB-KW"/>
</dbReference>
<dbReference type="GO" id="GO:0008982">
    <property type="term" value="F:protein-N(PI)-phosphohistidine-sugar phosphotransferase activity"/>
    <property type="evidence" value="ECO:0007669"/>
    <property type="project" value="InterPro"/>
</dbReference>
<dbReference type="GO" id="GO:0090588">
    <property type="term" value="F:protein-phosphocysteine-N-acetylmuramate phosphotransferase system transporter activity"/>
    <property type="evidence" value="ECO:0007669"/>
    <property type="project" value="TreeGrafter"/>
</dbReference>
<dbReference type="GO" id="GO:0009401">
    <property type="term" value="P:phosphoenolpyruvate-dependent sugar phosphotransferase system"/>
    <property type="evidence" value="ECO:0007669"/>
    <property type="project" value="UniProtKB-KW"/>
</dbReference>
<dbReference type="CDD" id="cd00212">
    <property type="entry name" value="PTS_IIB_glc"/>
    <property type="match status" value="1"/>
</dbReference>
<dbReference type="Gene3D" id="3.30.1360.60">
    <property type="entry name" value="Glucose permease domain IIB"/>
    <property type="match status" value="1"/>
</dbReference>
<dbReference type="InterPro" id="IPR036878">
    <property type="entry name" value="Glu_permease_IIB"/>
</dbReference>
<dbReference type="InterPro" id="IPR018113">
    <property type="entry name" value="PTrfase_EIIB_Cys"/>
</dbReference>
<dbReference type="InterPro" id="IPR003352">
    <property type="entry name" value="PTS_EIIC"/>
</dbReference>
<dbReference type="InterPro" id="IPR013013">
    <property type="entry name" value="PTS_EIIC_1"/>
</dbReference>
<dbReference type="InterPro" id="IPR001996">
    <property type="entry name" value="PTS_IIB_1"/>
</dbReference>
<dbReference type="InterPro" id="IPR050558">
    <property type="entry name" value="PTS_Sugar-Specific_Components"/>
</dbReference>
<dbReference type="NCBIfam" id="NF007152">
    <property type="entry name" value="PRK09586.1"/>
    <property type="match status" value="1"/>
</dbReference>
<dbReference type="PANTHER" id="PTHR30175">
    <property type="entry name" value="PHOSPHOTRANSFERASE SYSTEM TRANSPORT PROTEIN"/>
    <property type="match status" value="1"/>
</dbReference>
<dbReference type="PANTHER" id="PTHR30175:SF3">
    <property type="entry name" value="PTS SYSTEM N-ACETYLMURAMIC ACID-SPECIFIC EIIBC COMPONENT"/>
    <property type="match status" value="1"/>
</dbReference>
<dbReference type="Pfam" id="PF00367">
    <property type="entry name" value="PTS_EIIB"/>
    <property type="match status" value="1"/>
</dbReference>
<dbReference type="Pfam" id="PF02378">
    <property type="entry name" value="PTS_EIIC"/>
    <property type="match status" value="1"/>
</dbReference>
<dbReference type="SUPFAM" id="SSF55604">
    <property type="entry name" value="Glucose permease domain IIB"/>
    <property type="match status" value="1"/>
</dbReference>
<dbReference type="PROSITE" id="PS51098">
    <property type="entry name" value="PTS_EIIB_TYPE_1"/>
    <property type="match status" value="1"/>
</dbReference>
<dbReference type="PROSITE" id="PS01035">
    <property type="entry name" value="PTS_EIIB_TYPE_1_CYS"/>
    <property type="match status" value="1"/>
</dbReference>
<dbReference type="PROSITE" id="PS51103">
    <property type="entry name" value="PTS_EIIC_TYPE_1"/>
    <property type="match status" value="1"/>
</dbReference>
<keyword id="KW-0997">Cell inner membrane</keyword>
<keyword id="KW-1003">Cell membrane</keyword>
<keyword id="KW-0418">Kinase</keyword>
<keyword id="KW-0472">Membrane</keyword>
<keyword id="KW-0598">Phosphotransferase system</keyword>
<keyword id="KW-1185">Reference proteome</keyword>
<keyword id="KW-0762">Sugar transport</keyword>
<keyword id="KW-0808">Transferase</keyword>
<keyword id="KW-0812">Transmembrane</keyword>
<keyword id="KW-1133">Transmembrane helix</keyword>
<keyword id="KW-0813">Transport</keyword>